<name>Y2211_CORGL</name>
<comment type="subcellular location">
    <subcellularLocation>
        <location evidence="3">Cell membrane</location>
        <topology evidence="3">Multi-pass membrane protein</topology>
    </subcellularLocation>
</comment>
<comment type="similarity">
    <text evidence="3">Belongs to the AAE transporter (TC 2.A.81) family.</text>
</comment>
<protein>
    <recommendedName>
        <fullName>Uncharacterized transporter Cgl2211/cg2425</fullName>
    </recommendedName>
</protein>
<proteinExistence type="inferred from homology"/>
<organism>
    <name type="scientific">Corynebacterium glutamicum (strain ATCC 13032 / DSM 20300 / JCM 1318 / BCRC 11384 / CCUG 27702 / LMG 3730 / NBRC 12168 / NCIMB 10025 / NRRL B-2784 / 534)</name>
    <dbReference type="NCBI Taxonomy" id="196627"/>
    <lineage>
        <taxon>Bacteria</taxon>
        <taxon>Bacillati</taxon>
        <taxon>Actinomycetota</taxon>
        <taxon>Actinomycetes</taxon>
        <taxon>Mycobacteriales</taxon>
        <taxon>Corynebacteriaceae</taxon>
        <taxon>Corynebacterium</taxon>
    </lineage>
</organism>
<evidence type="ECO:0000255" key="1"/>
<evidence type="ECO:0000255" key="2">
    <source>
        <dbReference type="PROSITE-ProRule" id="PRU00544"/>
    </source>
</evidence>
<evidence type="ECO:0000305" key="3"/>
<dbReference type="EMBL" id="BA000036">
    <property type="protein sequence ID" value="BAB99604.1"/>
    <property type="molecule type" value="Genomic_DNA"/>
</dbReference>
<dbReference type="EMBL" id="BX927154">
    <property type="protein sequence ID" value="CAF20551.1"/>
    <property type="molecule type" value="Genomic_DNA"/>
</dbReference>
<dbReference type="RefSeq" id="NP_601414.1">
    <property type="nucleotide sequence ID" value="NC_003450.3"/>
</dbReference>
<dbReference type="RefSeq" id="WP_003859640.1">
    <property type="nucleotide sequence ID" value="NC_006958.1"/>
</dbReference>
<dbReference type="SMR" id="Q8NNI8"/>
<dbReference type="TCDB" id="2.A.81.1.3">
    <property type="family name" value="the aspartate:alanine exchanger (aaex) family"/>
</dbReference>
<dbReference type="KEGG" id="cgb:cg2425"/>
<dbReference type="KEGG" id="cgl:Cgl2211"/>
<dbReference type="PATRIC" id="fig|196627.13.peg.2147"/>
<dbReference type="eggNOG" id="COG0569">
    <property type="taxonomic scope" value="Bacteria"/>
</dbReference>
<dbReference type="eggNOG" id="COG2985">
    <property type="taxonomic scope" value="Bacteria"/>
</dbReference>
<dbReference type="HOGENOM" id="CLU_035023_3_0_11"/>
<dbReference type="OrthoDB" id="9155749at2"/>
<dbReference type="BioCyc" id="CORYNE:G18NG-11803-MONOMER"/>
<dbReference type="Proteomes" id="UP000000582">
    <property type="component" value="Chromosome"/>
</dbReference>
<dbReference type="Proteomes" id="UP000001009">
    <property type="component" value="Chromosome"/>
</dbReference>
<dbReference type="GO" id="GO:0005886">
    <property type="term" value="C:plasma membrane"/>
    <property type="evidence" value="ECO:0007669"/>
    <property type="project" value="UniProtKB-SubCell"/>
</dbReference>
<dbReference type="GO" id="GO:0008324">
    <property type="term" value="F:monoatomic cation transmembrane transporter activity"/>
    <property type="evidence" value="ECO:0007669"/>
    <property type="project" value="InterPro"/>
</dbReference>
<dbReference type="GO" id="GO:0006813">
    <property type="term" value="P:potassium ion transport"/>
    <property type="evidence" value="ECO:0007669"/>
    <property type="project" value="InterPro"/>
</dbReference>
<dbReference type="Gene3D" id="3.30.70.1450">
    <property type="entry name" value="Regulator of K+ conductance, C-terminal domain"/>
    <property type="match status" value="1"/>
</dbReference>
<dbReference type="InterPro" id="IPR050144">
    <property type="entry name" value="AAE_transporter"/>
</dbReference>
<dbReference type="InterPro" id="IPR006037">
    <property type="entry name" value="RCK_C"/>
</dbReference>
<dbReference type="InterPro" id="IPR036721">
    <property type="entry name" value="RCK_C_sf"/>
</dbReference>
<dbReference type="InterPro" id="IPR006512">
    <property type="entry name" value="YidE_YbjL"/>
</dbReference>
<dbReference type="NCBIfam" id="TIGR01625">
    <property type="entry name" value="YidE_YbjL_dupl"/>
    <property type="match status" value="2"/>
</dbReference>
<dbReference type="PANTHER" id="PTHR30445">
    <property type="entry name" value="K(+)_H(+) ANTIPORTER SUBUNIT KHTT"/>
    <property type="match status" value="1"/>
</dbReference>
<dbReference type="PANTHER" id="PTHR30445:SF3">
    <property type="entry name" value="TRANSPORT PROTEIN YIDE-RELATED"/>
    <property type="match status" value="1"/>
</dbReference>
<dbReference type="Pfam" id="PF06826">
    <property type="entry name" value="Asp-Al_Ex"/>
    <property type="match status" value="2"/>
</dbReference>
<dbReference type="Pfam" id="PF02080">
    <property type="entry name" value="TrkA_C"/>
    <property type="match status" value="1"/>
</dbReference>
<dbReference type="SUPFAM" id="SSF116726">
    <property type="entry name" value="TrkA C-terminal domain-like"/>
    <property type="match status" value="2"/>
</dbReference>
<dbReference type="PROSITE" id="PS51202">
    <property type="entry name" value="RCK_C"/>
    <property type="match status" value="2"/>
</dbReference>
<accession>Q8NNI8</accession>
<accession>Q6M3M8</accession>
<reference key="1">
    <citation type="journal article" date="2003" name="Appl. Microbiol. Biotechnol.">
        <title>The Corynebacterium glutamicum genome: features and impacts on biotechnological processes.</title>
        <authorList>
            <person name="Ikeda M."/>
            <person name="Nakagawa S."/>
        </authorList>
    </citation>
    <scope>NUCLEOTIDE SEQUENCE [LARGE SCALE GENOMIC DNA]</scope>
    <source>
        <strain>ATCC 13032 / DSM 20300 / JCM 1318 / BCRC 11384 / CCUG 27702 / LMG 3730 / NBRC 12168 / NCIMB 10025 / NRRL B-2784 / 534</strain>
    </source>
</reference>
<reference key="2">
    <citation type="journal article" date="2003" name="J. Biotechnol.">
        <title>The complete Corynebacterium glutamicum ATCC 13032 genome sequence and its impact on the production of L-aspartate-derived amino acids and vitamins.</title>
        <authorList>
            <person name="Kalinowski J."/>
            <person name="Bathe B."/>
            <person name="Bartels D."/>
            <person name="Bischoff N."/>
            <person name="Bott M."/>
            <person name="Burkovski A."/>
            <person name="Dusch N."/>
            <person name="Eggeling L."/>
            <person name="Eikmanns B.J."/>
            <person name="Gaigalat L."/>
            <person name="Goesmann A."/>
            <person name="Hartmann M."/>
            <person name="Huthmacher K."/>
            <person name="Kraemer R."/>
            <person name="Linke B."/>
            <person name="McHardy A.C."/>
            <person name="Meyer F."/>
            <person name="Moeckel B."/>
            <person name="Pfefferle W."/>
            <person name="Puehler A."/>
            <person name="Rey D.A."/>
            <person name="Rueckert C."/>
            <person name="Rupp O."/>
            <person name="Sahm H."/>
            <person name="Wendisch V.F."/>
            <person name="Wiegraebe I."/>
            <person name="Tauch A."/>
        </authorList>
    </citation>
    <scope>NUCLEOTIDE SEQUENCE [LARGE SCALE GENOMIC DNA]</scope>
    <source>
        <strain>ATCC 13032 / DSM 20300 / JCM 1318 / BCRC 11384 / CCUG 27702 / LMG 3730 / NBRC 12168 / NCIMB 10025 / NRRL B-2784 / 534</strain>
    </source>
</reference>
<keyword id="KW-1003">Cell membrane</keyword>
<keyword id="KW-0472">Membrane</keyword>
<keyword id="KW-1185">Reference proteome</keyword>
<keyword id="KW-0677">Repeat</keyword>
<keyword id="KW-0812">Transmembrane</keyword>
<keyword id="KW-1133">Transmembrane helix</keyword>
<keyword id="KW-0813">Transport</keyword>
<sequence>MSFLVENQLLALVVIMTVGLLLGRIKIFGFRLGVAAVLFVGLALSTIEPDISVPSLIYVVGLSLFVYTIGLEAGPGFFTSMKTTGLRNNALTLGAIIATTALAWALITVLNIDAASGAGMLTGALTNTPAMAAVVDALPSLIDDTGQLHLIAELPVVAYSLAYPLGVLIVILSIAIFSSVFKVDHNKEAEEAGVAVQELKGRRIRVTVADLPALENIPELLNLHVIVSRVERDGEQFIPLYGEHARIGDVLTVVGADEELNRAEKAIGELIDGDPYSNVELDYRRIFVSNTAVVGTPLSKLQPLFKDMLITRIRRGDTDLVASSDMTLQLGDRVRVVAPAEKLREATQLLGDSYKKLSDFNLLPLAAGLMIGVLVGMVEFPLPGGSSLKLGNAGGPLVVALLLGMINRTGKFVWQIPYGANLALRQLGITLFLAAIGTSAGAGFRSAISDPQSLTIIGFGALLTLFISITVLFVGHKLMKIPFGETAGILAGTQTHPAVLSYVSDASRNELPAMGYTSVYPLAMIAKILAAQTLLFLLI</sequence>
<gene>
    <name type="ordered locus">Cgl2211</name>
    <name type="ordered locus">cg2425</name>
</gene>
<feature type="chain" id="PRO_0000208769" description="Uncharacterized transporter Cgl2211/cg2425">
    <location>
        <begin position="1"/>
        <end position="539"/>
    </location>
</feature>
<feature type="transmembrane region" description="Helical" evidence="1">
    <location>
        <begin position="4"/>
        <end position="22"/>
    </location>
</feature>
<feature type="transmembrane region" description="Helical" evidence="1">
    <location>
        <begin position="27"/>
        <end position="46"/>
    </location>
</feature>
<feature type="transmembrane region" description="Helical" evidence="1">
    <location>
        <begin position="56"/>
        <end position="78"/>
    </location>
</feature>
<feature type="transmembrane region" description="Helical" evidence="1">
    <location>
        <begin position="90"/>
        <end position="112"/>
    </location>
</feature>
<feature type="transmembrane region" description="Helical" evidence="1">
    <location>
        <begin position="155"/>
        <end position="177"/>
    </location>
</feature>
<feature type="transmembrane region" description="Helical" evidence="1">
    <location>
        <begin position="360"/>
        <end position="382"/>
    </location>
</feature>
<feature type="transmembrane region" description="Helical" evidence="1">
    <location>
        <begin position="422"/>
        <end position="444"/>
    </location>
</feature>
<feature type="transmembrane region" description="Helical" evidence="1">
    <location>
        <begin position="453"/>
        <end position="475"/>
    </location>
</feature>
<feature type="transmembrane region" description="Helical" evidence="1">
    <location>
        <begin position="516"/>
        <end position="538"/>
    </location>
</feature>
<feature type="domain" description="RCK C-terminal 1" evidence="2">
    <location>
        <begin position="187"/>
        <end position="269"/>
    </location>
</feature>
<feature type="domain" description="RCK C-terminal 2" evidence="2">
    <location>
        <begin position="271"/>
        <end position="352"/>
    </location>
</feature>